<name>LSPA_AZOSB</name>
<dbReference type="EC" id="3.4.23.36" evidence="1"/>
<dbReference type="EMBL" id="AM406670">
    <property type="protein sequence ID" value="CAL93821.1"/>
    <property type="molecule type" value="Genomic_DNA"/>
</dbReference>
<dbReference type="RefSeq" id="WP_011764937.1">
    <property type="nucleotide sequence ID" value="NC_008702.1"/>
</dbReference>
<dbReference type="SMR" id="A1K4R6"/>
<dbReference type="STRING" id="62928.azo1204"/>
<dbReference type="KEGG" id="azo:azo1204"/>
<dbReference type="eggNOG" id="COG0597">
    <property type="taxonomic scope" value="Bacteria"/>
</dbReference>
<dbReference type="HOGENOM" id="CLU_083252_4_0_4"/>
<dbReference type="UniPathway" id="UPA00665"/>
<dbReference type="Proteomes" id="UP000002588">
    <property type="component" value="Chromosome"/>
</dbReference>
<dbReference type="GO" id="GO:0005886">
    <property type="term" value="C:plasma membrane"/>
    <property type="evidence" value="ECO:0007669"/>
    <property type="project" value="UniProtKB-SubCell"/>
</dbReference>
<dbReference type="GO" id="GO:0004190">
    <property type="term" value="F:aspartic-type endopeptidase activity"/>
    <property type="evidence" value="ECO:0007669"/>
    <property type="project" value="UniProtKB-UniRule"/>
</dbReference>
<dbReference type="GO" id="GO:0006508">
    <property type="term" value="P:proteolysis"/>
    <property type="evidence" value="ECO:0007669"/>
    <property type="project" value="UniProtKB-KW"/>
</dbReference>
<dbReference type="HAMAP" id="MF_00161">
    <property type="entry name" value="LspA"/>
    <property type="match status" value="1"/>
</dbReference>
<dbReference type="InterPro" id="IPR001872">
    <property type="entry name" value="Peptidase_A8"/>
</dbReference>
<dbReference type="NCBIfam" id="TIGR00077">
    <property type="entry name" value="lspA"/>
    <property type="match status" value="1"/>
</dbReference>
<dbReference type="PANTHER" id="PTHR33695">
    <property type="entry name" value="LIPOPROTEIN SIGNAL PEPTIDASE"/>
    <property type="match status" value="1"/>
</dbReference>
<dbReference type="PANTHER" id="PTHR33695:SF1">
    <property type="entry name" value="LIPOPROTEIN SIGNAL PEPTIDASE"/>
    <property type="match status" value="1"/>
</dbReference>
<dbReference type="Pfam" id="PF01252">
    <property type="entry name" value="Peptidase_A8"/>
    <property type="match status" value="1"/>
</dbReference>
<dbReference type="PRINTS" id="PR00781">
    <property type="entry name" value="LIPOSIGPTASE"/>
</dbReference>
<dbReference type="PROSITE" id="PS00855">
    <property type="entry name" value="SPASE_II"/>
    <property type="match status" value="1"/>
</dbReference>
<sequence>MPDLQAGQRPAFVAMLPWLVLAAAVMGLDQLTKQVVLATMQYGEVIPVTGFFDLVLVFNRGAAFSFLAEHSGWQRWFFTGLAVVICGWLLALMHQHREERLLPAAFALIIGGAIGNVVDRLLHGAVVDFLYFHAGRYGWPAFNLADSAITLGVGLMLWAQLRAGKHKPEAGPERPS</sequence>
<proteinExistence type="inferred from homology"/>
<protein>
    <recommendedName>
        <fullName evidence="1">Lipoprotein signal peptidase</fullName>
        <ecNumber evidence="1">3.4.23.36</ecNumber>
    </recommendedName>
    <alternativeName>
        <fullName evidence="1">Prolipoprotein signal peptidase</fullName>
    </alternativeName>
    <alternativeName>
        <fullName evidence="1">Signal peptidase II</fullName>
        <shortName evidence="1">SPase II</shortName>
    </alternativeName>
</protein>
<comment type="function">
    <text evidence="1">This protein specifically catalyzes the removal of signal peptides from prolipoproteins.</text>
</comment>
<comment type="catalytic activity">
    <reaction evidence="1">
        <text>Release of signal peptides from bacterial membrane prolipoproteins. Hydrolyzes -Xaa-Yaa-Zaa-|-(S,diacylglyceryl)Cys-, in which Xaa is hydrophobic (preferably Leu), and Yaa (Ala or Ser) and Zaa (Gly or Ala) have small, neutral side chains.</text>
        <dbReference type="EC" id="3.4.23.36"/>
    </reaction>
</comment>
<comment type="pathway">
    <text evidence="1">Protein modification; lipoprotein biosynthesis (signal peptide cleavage).</text>
</comment>
<comment type="subcellular location">
    <subcellularLocation>
        <location evidence="1">Cell inner membrane</location>
        <topology evidence="1">Multi-pass membrane protein</topology>
    </subcellularLocation>
</comment>
<comment type="similarity">
    <text evidence="1">Belongs to the peptidase A8 family.</text>
</comment>
<reference key="1">
    <citation type="journal article" date="2006" name="Nat. Biotechnol.">
        <title>Complete genome of the mutualistic, N2-fixing grass endophyte Azoarcus sp. strain BH72.</title>
        <authorList>
            <person name="Krause A."/>
            <person name="Ramakumar A."/>
            <person name="Bartels D."/>
            <person name="Battistoni F."/>
            <person name="Bekel T."/>
            <person name="Boch J."/>
            <person name="Boehm M."/>
            <person name="Friedrich F."/>
            <person name="Hurek T."/>
            <person name="Krause L."/>
            <person name="Linke B."/>
            <person name="McHardy A.C."/>
            <person name="Sarkar A."/>
            <person name="Schneiker S."/>
            <person name="Syed A.A."/>
            <person name="Thauer R."/>
            <person name="Vorhoelter F.-J."/>
            <person name="Weidner S."/>
            <person name="Puehler A."/>
            <person name="Reinhold-Hurek B."/>
            <person name="Kaiser O."/>
            <person name="Goesmann A."/>
        </authorList>
    </citation>
    <scope>NUCLEOTIDE SEQUENCE [LARGE SCALE GENOMIC DNA]</scope>
    <source>
        <strain>BH72</strain>
    </source>
</reference>
<accession>A1K4R6</accession>
<gene>
    <name evidence="1" type="primary">lspA</name>
    <name type="ordered locus">azo1204</name>
</gene>
<feature type="chain" id="PRO_1000038779" description="Lipoprotein signal peptidase">
    <location>
        <begin position="1"/>
        <end position="176"/>
    </location>
</feature>
<feature type="transmembrane region" description="Helical" evidence="1">
    <location>
        <begin position="11"/>
        <end position="31"/>
    </location>
</feature>
<feature type="transmembrane region" description="Helical" evidence="1">
    <location>
        <begin position="38"/>
        <end position="58"/>
    </location>
</feature>
<feature type="transmembrane region" description="Helical" evidence="1">
    <location>
        <begin position="76"/>
        <end position="96"/>
    </location>
</feature>
<feature type="transmembrane region" description="Helical" evidence="1">
    <location>
        <begin position="101"/>
        <end position="121"/>
    </location>
</feature>
<feature type="transmembrane region" description="Helical" evidence="1">
    <location>
        <begin position="139"/>
        <end position="159"/>
    </location>
</feature>
<feature type="active site" evidence="1">
    <location>
        <position position="128"/>
    </location>
</feature>
<feature type="active site" evidence="1">
    <location>
        <position position="146"/>
    </location>
</feature>
<evidence type="ECO:0000255" key="1">
    <source>
        <dbReference type="HAMAP-Rule" id="MF_00161"/>
    </source>
</evidence>
<keyword id="KW-0064">Aspartyl protease</keyword>
<keyword id="KW-0997">Cell inner membrane</keyword>
<keyword id="KW-1003">Cell membrane</keyword>
<keyword id="KW-0378">Hydrolase</keyword>
<keyword id="KW-0472">Membrane</keyword>
<keyword id="KW-0645">Protease</keyword>
<keyword id="KW-1185">Reference proteome</keyword>
<keyword id="KW-0812">Transmembrane</keyword>
<keyword id="KW-1133">Transmembrane helix</keyword>
<organism>
    <name type="scientific">Azoarcus sp. (strain BH72)</name>
    <dbReference type="NCBI Taxonomy" id="418699"/>
    <lineage>
        <taxon>Bacteria</taxon>
        <taxon>Pseudomonadati</taxon>
        <taxon>Pseudomonadota</taxon>
        <taxon>Betaproteobacteria</taxon>
        <taxon>Rhodocyclales</taxon>
        <taxon>Zoogloeaceae</taxon>
        <taxon>Azoarcus</taxon>
    </lineage>
</organism>